<gene>
    <name type="primary">HMGN2</name>
    <name type="synonym">HMG17</name>
</gene>
<keyword id="KW-0007">Acetylation</keyword>
<keyword id="KW-0013">ADP-ribosylation</keyword>
<keyword id="KW-0963">Cytoplasm</keyword>
<keyword id="KW-0238">DNA-binding</keyword>
<keyword id="KW-1017">Isopeptide bond</keyword>
<keyword id="KW-0539">Nucleus</keyword>
<keyword id="KW-0597">Phosphoprotein</keyword>
<keyword id="KW-1185">Reference proteome</keyword>
<keyword id="KW-0832">Ubl conjugation</keyword>
<sequence>MPKRKAEGDAKGDKAKVKDEPQRRSARLSAKPAPPKPEPKPKKAPAKKGEKVPKGKKGKADADKEGNNPAENGDAKTDQAQKAEGAGDAK</sequence>
<protein>
    <recommendedName>
        <fullName>Non-histone chromosomal protein HMG-17</fullName>
    </recommendedName>
    <alternativeName>
        <fullName>High mobility group nucleosome-binding domain-containing protein 2</fullName>
    </alternativeName>
</protein>
<dbReference type="EMBL" id="CR859118">
    <property type="protein sequence ID" value="CAH91310.1"/>
    <property type="molecule type" value="mRNA"/>
</dbReference>
<dbReference type="RefSeq" id="NP_001125775.1">
    <property type="nucleotide sequence ID" value="NM_001132303.1"/>
</dbReference>
<dbReference type="STRING" id="9601.ENSPPYP00000001943"/>
<dbReference type="GeneID" id="100172702"/>
<dbReference type="KEGG" id="pon:100172702"/>
<dbReference type="CTD" id="3151"/>
<dbReference type="eggNOG" id="ENOG502S5FK">
    <property type="taxonomic scope" value="Eukaryota"/>
</dbReference>
<dbReference type="InParanoid" id="Q5RAA0"/>
<dbReference type="Proteomes" id="UP000001595">
    <property type="component" value="Unplaced"/>
</dbReference>
<dbReference type="GO" id="GO:0000785">
    <property type="term" value="C:chromatin"/>
    <property type="evidence" value="ECO:0007669"/>
    <property type="project" value="InterPro"/>
</dbReference>
<dbReference type="GO" id="GO:0005737">
    <property type="term" value="C:cytoplasm"/>
    <property type="evidence" value="ECO:0007669"/>
    <property type="project" value="UniProtKB-SubCell"/>
</dbReference>
<dbReference type="GO" id="GO:0005634">
    <property type="term" value="C:nucleus"/>
    <property type="evidence" value="ECO:0007669"/>
    <property type="project" value="UniProtKB-SubCell"/>
</dbReference>
<dbReference type="GO" id="GO:0031492">
    <property type="term" value="F:nucleosomal DNA binding"/>
    <property type="evidence" value="ECO:0007669"/>
    <property type="project" value="InterPro"/>
</dbReference>
<dbReference type="GO" id="GO:0006325">
    <property type="term" value="P:chromatin organization"/>
    <property type="evidence" value="ECO:0007669"/>
    <property type="project" value="TreeGrafter"/>
</dbReference>
<dbReference type="InterPro" id="IPR000079">
    <property type="entry name" value="HMGN_fam"/>
</dbReference>
<dbReference type="PANTHER" id="PTHR23087:SF13">
    <property type="entry name" value="NON-HISTONE CHROMOSOMAL PROTEIN HMG-17"/>
    <property type="match status" value="1"/>
</dbReference>
<dbReference type="PANTHER" id="PTHR23087">
    <property type="entry name" value="NONHISTONE CHROMOSOMAL PROTEIN HMG"/>
    <property type="match status" value="1"/>
</dbReference>
<dbReference type="Pfam" id="PF01101">
    <property type="entry name" value="HMG14_17"/>
    <property type="match status" value="1"/>
</dbReference>
<dbReference type="PRINTS" id="PR00925">
    <property type="entry name" value="NONHISHMG17"/>
</dbReference>
<dbReference type="SMART" id="SM00527">
    <property type="entry name" value="HMG17"/>
    <property type="match status" value="1"/>
</dbReference>
<dbReference type="PROSITE" id="PS00355">
    <property type="entry name" value="HMG14_17"/>
    <property type="match status" value="1"/>
</dbReference>
<organism>
    <name type="scientific">Pongo abelii</name>
    <name type="common">Sumatran orangutan</name>
    <name type="synonym">Pongo pygmaeus abelii</name>
    <dbReference type="NCBI Taxonomy" id="9601"/>
    <lineage>
        <taxon>Eukaryota</taxon>
        <taxon>Metazoa</taxon>
        <taxon>Chordata</taxon>
        <taxon>Craniata</taxon>
        <taxon>Vertebrata</taxon>
        <taxon>Euteleostomi</taxon>
        <taxon>Mammalia</taxon>
        <taxon>Eutheria</taxon>
        <taxon>Euarchontoglires</taxon>
        <taxon>Primates</taxon>
        <taxon>Haplorrhini</taxon>
        <taxon>Catarrhini</taxon>
        <taxon>Hominidae</taxon>
        <taxon>Pongo</taxon>
    </lineage>
</organism>
<name>HMGN2_PONAB</name>
<proteinExistence type="inferred from homology"/>
<accession>Q5RAA0</accession>
<feature type="chain" id="PRO_0000206700" description="Non-histone chromosomal protein HMG-17">
    <location>
        <begin position="1"/>
        <end position="90"/>
    </location>
</feature>
<feature type="region of interest" description="Disordered" evidence="3">
    <location>
        <begin position="1"/>
        <end position="90"/>
    </location>
</feature>
<feature type="compositionally biased region" description="Basic and acidic residues" evidence="3">
    <location>
        <begin position="1"/>
        <end position="23"/>
    </location>
</feature>
<feature type="compositionally biased region" description="Basic and acidic residues" evidence="3">
    <location>
        <begin position="37"/>
        <end position="66"/>
    </location>
</feature>
<feature type="compositionally biased region" description="Basic and acidic residues" evidence="3">
    <location>
        <begin position="73"/>
        <end position="90"/>
    </location>
</feature>
<feature type="modified residue" description="Phosphoserine" evidence="2">
    <location>
        <position position="25"/>
    </location>
</feature>
<feature type="modified residue" description="ADP-ribosylserine; alternate" evidence="2">
    <location>
        <position position="29"/>
    </location>
</feature>
<feature type="modified residue" description="Phosphoserine; alternate" evidence="2">
    <location>
        <position position="29"/>
    </location>
</feature>
<feature type="modified residue" description="N6-acetyllysine; alternate" evidence="2">
    <location>
        <position position="82"/>
    </location>
</feature>
<feature type="cross-link" description="Glycyl lysine isopeptide (Lys-Gly) (interchain with G-Cter in SUMO2); alternate" evidence="2">
    <location>
        <position position="82"/>
    </location>
</feature>
<evidence type="ECO:0000250" key="1"/>
<evidence type="ECO:0000250" key="2">
    <source>
        <dbReference type="UniProtKB" id="P05204"/>
    </source>
</evidence>
<evidence type="ECO:0000256" key="3">
    <source>
        <dbReference type="SAM" id="MobiDB-lite"/>
    </source>
</evidence>
<evidence type="ECO:0000305" key="4"/>
<reference key="1">
    <citation type="submission" date="2004-11" db="EMBL/GenBank/DDBJ databases">
        <authorList>
            <consortium name="The German cDNA consortium"/>
        </authorList>
    </citation>
    <scope>NUCLEOTIDE SEQUENCE [LARGE SCALE MRNA]</scope>
    <source>
        <tissue>Heart</tissue>
    </source>
</reference>
<comment type="function">
    <text evidence="1">Binds to the inner side of the nucleosomal DNA thus altering the interaction between the DNA and the histone octamer. May be involved in the process which maintains transcribable genes in a unique chromatin conformation (By similarity).</text>
</comment>
<comment type="subcellular location">
    <subcellularLocation>
        <location evidence="1">Nucleus</location>
    </subcellularLocation>
    <subcellularLocation>
        <location evidence="1">Cytoplasm</location>
    </subcellularLocation>
    <text evidence="1">Cytoplasmic enrichment upon phosphorylation.</text>
</comment>
<comment type="PTM">
    <text evidence="1">Phosphorylation favors cytoplasmic localization.</text>
</comment>
<comment type="similarity">
    <text evidence="4">Belongs to the HMGN family.</text>
</comment>